<comment type="function">
    <text evidence="1">Cell wall formation. Adds enolpyruvyl to UDP-N-acetylglucosamine.</text>
</comment>
<comment type="catalytic activity">
    <reaction evidence="1">
        <text>phosphoenolpyruvate + UDP-N-acetyl-alpha-D-glucosamine = UDP-N-acetyl-3-O-(1-carboxyvinyl)-alpha-D-glucosamine + phosphate</text>
        <dbReference type="Rhea" id="RHEA:18681"/>
        <dbReference type="ChEBI" id="CHEBI:43474"/>
        <dbReference type="ChEBI" id="CHEBI:57705"/>
        <dbReference type="ChEBI" id="CHEBI:58702"/>
        <dbReference type="ChEBI" id="CHEBI:68483"/>
        <dbReference type="EC" id="2.5.1.7"/>
    </reaction>
</comment>
<comment type="pathway">
    <text evidence="1">Cell wall biogenesis; peptidoglycan biosynthesis.</text>
</comment>
<comment type="subcellular location">
    <subcellularLocation>
        <location evidence="1">Cytoplasm</location>
    </subcellularLocation>
</comment>
<comment type="similarity">
    <text evidence="1">Belongs to the EPSP synthase family. MurA subfamily.</text>
</comment>
<feature type="chain" id="PRO_1000094697" description="UDP-N-acetylglucosamine 1-carboxyvinyltransferase">
    <location>
        <begin position="1"/>
        <end position="419"/>
    </location>
</feature>
<feature type="active site" description="Proton donor" evidence="1">
    <location>
        <position position="115"/>
    </location>
</feature>
<feature type="binding site" evidence="1">
    <location>
        <begin position="22"/>
        <end position="23"/>
    </location>
    <ligand>
        <name>phosphoenolpyruvate</name>
        <dbReference type="ChEBI" id="CHEBI:58702"/>
    </ligand>
</feature>
<feature type="binding site" evidence="1">
    <location>
        <position position="91"/>
    </location>
    <ligand>
        <name>UDP-N-acetyl-alpha-D-glucosamine</name>
        <dbReference type="ChEBI" id="CHEBI:57705"/>
    </ligand>
</feature>
<feature type="binding site" evidence="1">
    <location>
        <begin position="120"/>
        <end position="124"/>
    </location>
    <ligand>
        <name>UDP-N-acetyl-alpha-D-glucosamine</name>
        <dbReference type="ChEBI" id="CHEBI:57705"/>
    </ligand>
</feature>
<feature type="binding site" evidence="1">
    <location>
        <begin position="160"/>
        <end position="163"/>
    </location>
    <ligand>
        <name>UDP-N-acetyl-alpha-D-glucosamine</name>
        <dbReference type="ChEBI" id="CHEBI:57705"/>
    </ligand>
</feature>
<feature type="binding site" evidence="1">
    <location>
        <position position="305"/>
    </location>
    <ligand>
        <name>UDP-N-acetyl-alpha-D-glucosamine</name>
        <dbReference type="ChEBI" id="CHEBI:57705"/>
    </ligand>
</feature>
<feature type="binding site" evidence="1">
    <location>
        <position position="327"/>
    </location>
    <ligand>
        <name>UDP-N-acetyl-alpha-D-glucosamine</name>
        <dbReference type="ChEBI" id="CHEBI:57705"/>
    </ligand>
</feature>
<feature type="modified residue" description="2-(S-cysteinyl)pyruvic acid O-phosphothioketal" evidence="1">
    <location>
        <position position="115"/>
    </location>
</feature>
<dbReference type="EC" id="2.5.1.7" evidence="1"/>
<dbReference type="EMBL" id="CP000964">
    <property type="protein sequence ID" value="ACI10433.1"/>
    <property type="molecule type" value="Genomic_DNA"/>
</dbReference>
<dbReference type="SMR" id="B5XSV2"/>
<dbReference type="KEGG" id="kpe:KPK_0522"/>
<dbReference type="HOGENOM" id="CLU_027387_0_0_6"/>
<dbReference type="UniPathway" id="UPA00219"/>
<dbReference type="Proteomes" id="UP000001734">
    <property type="component" value="Chromosome"/>
</dbReference>
<dbReference type="GO" id="GO:0005737">
    <property type="term" value="C:cytoplasm"/>
    <property type="evidence" value="ECO:0007669"/>
    <property type="project" value="UniProtKB-SubCell"/>
</dbReference>
<dbReference type="GO" id="GO:0008760">
    <property type="term" value="F:UDP-N-acetylglucosamine 1-carboxyvinyltransferase activity"/>
    <property type="evidence" value="ECO:0007669"/>
    <property type="project" value="UniProtKB-UniRule"/>
</dbReference>
<dbReference type="GO" id="GO:0051301">
    <property type="term" value="P:cell division"/>
    <property type="evidence" value="ECO:0007669"/>
    <property type="project" value="UniProtKB-KW"/>
</dbReference>
<dbReference type="GO" id="GO:0071555">
    <property type="term" value="P:cell wall organization"/>
    <property type="evidence" value="ECO:0007669"/>
    <property type="project" value="UniProtKB-KW"/>
</dbReference>
<dbReference type="GO" id="GO:0009252">
    <property type="term" value="P:peptidoglycan biosynthetic process"/>
    <property type="evidence" value="ECO:0007669"/>
    <property type="project" value="UniProtKB-UniRule"/>
</dbReference>
<dbReference type="GO" id="GO:0008360">
    <property type="term" value="P:regulation of cell shape"/>
    <property type="evidence" value="ECO:0007669"/>
    <property type="project" value="UniProtKB-KW"/>
</dbReference>
<dbReference type="GO" id="GO:0019277">
    <property type="term" value="P:UDP-N-acetylgalactosamine biosynthetic process"/>
    <property type="evidence" value="ECO:0007669"/>
    <property type="project" value="InterPro"/>
</dbReference>
<dbReference type="CDD" id="cd01555">
    <property type="entry name" value="UdpNAET"/>
    <property type="match status" value="1"/>
</dbReference>
<dbReference type="FunFam" id="3.65.10.10:FF:000002">
    <property type="entry name" value="UDP-N-acetylglucosamine 1-carboxyvinyltransferase"/>
    <property type="match status" value="1"/>
</dbReference>
<dbReference type="Gene3D" id="3.65.10.10">
    <property type="entry name" value="Enolpyruvate transferase domain"/>
    <property type="match status" value="2"/>
</dbReference>
<dbReference type="HAMAP" id="MF_00111">
    <property type="entry name" value="MurA"/>
    <property type="match status" value="1"/>
</dbReference>
<dbReference type="InterPro" id="IPR001986">
    <property type="entry name" value="Enolpyruvate_Tfrase_dom"/>
</dbReference>
<dbReference type="InterPro" id="IPR036968">
    <property type="entry name" value="Enolpyruvate_Tfrase_sf"/>
</dbReference>
<dbReference type="InterPro" id="IPR050068">
    <property type="entry name" value="MurA_subfamily"/>
</dbReference>
<dbReference type="InterPro" id="IPR013792">
    <property type="entry name" value="RNA3'P_cycl/enolpyr_Trfase_a/b"/>
</dbReference>
<dbReference type="InterPro" id="IPR005750">
    <property type="entry name" value="UDP_GlcNAc_COvinyl_MurA"/>
</dbReference>
<dbReference type="NCBIfam" id="TIGR01072">
    <property type="entry name" value="murA"/>
    <property type="match status" value="1"/>
</dbReference>
<dbReference type="NCBIfam" id="NF006873">
    <property type="entry name" value="PRK09369.1"/>
    <property type="match status" value="1"/>
</dbReference>
<dbReference type="PANTHER" id="PTHR43783">
    <property type="entry name" value="UDP-N-ACETYLGLUCOSAMINE 1-CARBOXYVINYLTRANSFERASE"/>
    <property type="match status" value="1"/>
</dbReference>
<dbReference type="PANTHER" id="PTHR43783:SF1">
    <property type="entry name" value="UDP-N-ACETYLGLUCOSAMINE 1-CARBOXYVINYLTRANSFERASE"/>
    <property type="match status" value="1"/>
</dbReference>
<dbReference type="Pfam" id="PF00275">
    <property type="entry name" value="EPSP_synthase"/>
    <property type="match status" value="1"/>
</dbReference>
<dbReference type="SUPFAM" id="SSF55205">
    <property type="entry name" value="EPT/RTPC-like"/>
    <property type="match status" value="1"/>
</dbReference>
<organism>
    <name type="scientific">Klebsiella pneumoniae (strain 342)</name>
    <dbReference type="NCBI Taxonomy" id="507522"/>
    <lineage>
        <taxon>Bacteria</taxon>
        <taxon>Pseudomonadati</taxon>
        <taxon>Pseudomonadota</taxon>
        <taxon>Gammaproteobacteria</taxon>
        <taxon>Enterobacterales</taxon>
        <taxon>Enterobacteriaceae</taxon>
        <taxon>Klebsiella/Raoultella group</taxon>
        <taxon>Klebsiella</taxon>
        <taxon>Klebsiella pneumoniae complex</taxon>
    </lineage>
</organism>
<name>MURA_KLEP3</name>
<accession>B5XSV2</accession>
<protein>
    <recommendedName>
        <fullName evidence="1">UDP-N-acetylglucosamine 1-carboxyvinyltransferase</fullName>
        <ecNumber evidence="1">2.5.1.7</ecNumber>
    </recommendedName>
    <alternativeName>
        <fullName evidence="1">Enoylpyruvate transferase</fullName>
    </alternativeName>
    <alternativeName>
        <fullName evidence="1">UDP-N-acetylglucosamine enolpyruvyl transferase</fullName>
        <shortName evidence="1">EPT</shortName>
    </alternativeName>
</protein>
<keyword id="KW-0131">Cell cycle</keyword>
<keyword id="KW-0132">Cell division</keyword>
<keyword id="KW-0133">Cell shape</keyword>
<keyword id="KW-0961">Cell wall biogenesis/degradation</keyword>
<keyword id="KW-0963">Cytoplasm</keyword>
<keyword id="KW-0573">Peptidoglycan synthesis</keyword>
<keyword id="KW-0670">Pyruvate</keyword>
<keyword id="KW-0808">Transferase</keyword>
<evidence type="ECO:0000255" key="1">
    <source>
        <dbReference type="HAMAP-Rule" id="MF_00111"/>
    </source>
</evidence>
<proteinExistence type="inferred from homology"/>
<sequence>MDKFRVQGPTRLQGEVTISGAKNAALPILFSALLAEEPVEIQNVPKLKDIDTTMKLLSQLGAKVERNGSVWIDAGPVDVFCAPYDLVKTMRASIWALGPLVARFGQGQVSLPGGCAIGARPVDLHISGLEQLGAEIKLEEGYVKASVNGRLKGAHIVMDKVSVGATVTIMSAATLAEGTTIIENAAREPEIVDTANFLNALGAKIKGQGTDRITIEGVQRLGGGVYRVLPDRIETGTFLVAAAISGGKILCRNAQPDTLDAVLAKLRDAGADIETGEDWISLDMHGNRPKAVNVRTAPHPGFPTDMQAQFTLLNLVAEGTGVITETIFENRFMHIPELIRMGAHAEIESNTAICHGVKQLSGAQVMATDLRASASLVLAGCIAEGTTIVDRIYHIDRGYERIEDKLQALGANIQRVKGE</sequence>
<reference key="1">
    <citation type="journal article" date="2008" name="PLoS Genet.">
        <title>Complete genome sequence of the N2-fixing broad host range endophyte Klebsiella pneumoniae 342 and virulence predictions verified in mice.</title>
        <authorList>
            <person name="Fouts D.E."/>
            <person name="Tyler H.L."/>
            <person name="DeBoy R.T."/>
            <person name="Daugherty S."/>
            <person name="Ren Q."/>
            <person name="Badger J.H."/>
            <person name="Durkin A.S."/>
            <person name="Huot H."/>
            <person name="Shrivastava S."/>
            <person name="Kothari S."/>
            <person name="Dodson R.J."/>
            <person name="Mohamoud Y."/>
            <person name="Khouri H."/>
            <person name="Roesch L.F.W."/>
            <person name="Krogfelt K.A."/>
            <person name="Struve C."/>
            <person name="Triplett E.W."/>
            <person name="Methe B.A."/>
        </authorList>
    </citation>
    <scope>NUCLEOTIDE SEQUENCE [LARGE SCALE GENOMIC DNA]</scope>
    <source>
        <strain>342</strain>
    </source>
</reference>
<gene>
    <name evidence="1" type="primary">murA</name>
    <name type="ordered locus">KPK_0522</name>
</gene>